<comment type="function">
    <text evidence="1">Transfers the 4'-phosphopantetheine moiety from coenzyme A to a Ser of acyl-carrier-protein.</text>
</comment>
<comment type="catalytic activity">
    <reaction evidence="1">
        <text>apo-[ACP] + CoA = holo-[ACP] + adenosine 3',5'-bisphosphate + H(+)</text>
        <dbReference type="Rhea" id="RHEA:12068"/>
        <dbReference type="Rhea" id="RHEA-COMP:9685"/>
        <dbReference type="Rhea" id="RHEA-COMP:9690"/>
        <dbReference type="ChEBI" id="CHEBI:15378"/>
        <dbReference type="ChEBI" id="CHEBI:29999"/>
        <dbReference type="ChEBI" id="CHEBI:57287"/>
        <dbReference type="ChEBI" id="CHEBI:58343"/>
        <dbReference type="ChEBI" id="CHEBI:64479"/>
        <dbReference type="EC" id="2.7.8.7"/>
    </reaction>
</comment>
<comment type="cofactor">
    <cofactor evidence="1">
        <name>Mg(2+)</name>
        <dbReference type="ChEBI" id="CHEBI:18420"/>
    </cofactor>
</comment>
<comment type="subcellular location">
    <subcellularLocation>
        <location evidence="1">Cytoplasm</location>
    </subcellularLocation>
</comment>
<comment type="similarity">
    <text evidence="1">Belongs to the P-Pant transferase superfamily. AcpS family.</text>
</comment>
<evidence type="ECO:0000255" key="1">
    <source>
        <dbReference type="HAMAP-Rule" id="MF_00101"/>
    </source>
</evidence>
<dbReference type="EC" id="2.7.8.7" evidence="1"/>
<dbReference type="EMBL" id="AP010904">
    <property type="protein sequence ID" value="BAH76246.1"/>
    <property type="molecule type" value="Genomic_DNA"/>
</dbReference>
<dbReference type="RefSeq" id="WP_015861412.1">
    <property type="nucleotide sequence ID" value="NC_012796.1"/>
</dbReference>
<dbReference type="SMR" id="C4XGU1"/>
<dbReference type="STRING" id="573370.DMR_27550"/>
<dbReference type="KEGG" id="dma:DMR_27550"/>
<dbReference type="eggNOG" id="COG0736">
    <property type="taxonomic scope" value="Bacteria"/>
</dbReference>
<dbReference type="HOGENOM" id="CLU_089696_0_2_7"/>
<dbReference type="OrthoDB" id="517356at2"/>
<dbReference type="Proteomes" id="UP000009071">
    <property type="component" value="Chromosome"/>
</dbReference>
<dbReference type="GO" id="GO:0005737">
    <property type="term" value="C:cytoplasm"/>
    <property type="evidence" value="ECO:0007669"/>
    <property type="project" value="UniProtKB-SubCell"/>
</dbReference>
<dbReference type="GO" id="GO:0008897">
    <property type="term" value="F:holo-[acyl-carrier-protein] synthase activity"/>
    <property type="evidence" value="ECO:0007669"/>
    <property type="project" value="UniProtKB-UniRule"/>
</dbReference>
<dbReference type="GO" id="GO:0000287">
    <property type="term" value="F:magnesium ion binding"/>
    <property type="evidence" value="ECO:0007669"/>
    <property type="project" value="UniProtKB-UniRule"/>
</dbReference>
<dbReference type="GO" id="GO:0006633">
    <property type="term" value="P:fatty acid biosynthetic process"/>
    <property type="evidence" value="ECO:0007669"/>
    <property type="project" value="UniProtKB-UniRule"/>
</dbReference>
<dbReference type="Gene3D" id="3.90.470.20">
    <property type="entry name" value="4'-phosphopantetheinyl transferase domain"/>
    <property type="match status" value="1"/>
</dbReference>
<dbReference type="HAMAP" id="MF_00101">
    <property type="entry name" value="AcpS"/>
    <property type="match status" value="1"/>
</dbReference>
<dbReference type="InterPro" id="IPR008278">
    <property type="entry name" value="4-PPantetheinyl_Trfase_dom"/>
</dbReference>
<dbReference type="InterPro" id="IPR037143">
    <property type="entry name" value="4-PPantetheinyl_Trfase_dom_sf"/>
</dbReference>
<dbReference type="InterPro" id="IPR002582">
    <property type="entry name" value="ACPS"/>
</dbReference>
<dbReference type="InterPro" id="IPR004568">
    <property type="entry name" value="Ppantetheine-prot_Trfase_dom"/>
</dbReference>
<dbReference type="NCBIfam" id="TIGR00516">
    <property type="entry name" value="acpS"/>
    <property type="match status" value="1"/>
</dbReference>
<dbReference type="NCBIfam" id="TIGR00556">
    <property type="entry name" value="pantethn_trn"/>
    <property type="match status" value="1"/>
</dbReference>
<dbReference type="NCBIfam" id="NF011251">
    <property type="entry name" value="PRK14657.1"/>
    <property type="match status" value="1"/>
</dbReference>
<dbReference type="Pfam" id="PF01648">
    <property type="entry name" value="ACPS"/>
    <property type="match status" value="1"/>
</dbReference>
<dbReference type="SUPFAM" id="SSF56214">
    <property type="entry name" value="4'-phosphopantetheinyl transferase"/>
    <property type="match status" value="1"/>
</dbReference>
<protein>
    <recommendedName>
        <fullName evidence="1">Holo-[acyl-carrier-protein] synthase</fullName>
        <shortName evidence="1">Holo-ACP synthase</shortName>
        <ecNumber evidence="1">2.7.8.7</ecNumber>
    </recommendedName>
    <alternativeName>
        <fullName evidence="1">4'-phosphopantetheinyl transferase AcpS</fullName>
    </alternativeName>
</protein>
<sequence length="123" mass="12758">MIRGLGIDVVELDRIEAALIRFGDRFLARILTPAERAALPPIPLTRTAGLFAAKEAAAKALGTGFAQGVAFHTLEILSDAAGRPALTLHGPALARAEALGATSWHVSISHSRDTAAAVVVLEG</sequence>
<gene>
    <name evidence="1" type="primary">acpS</name>
    <name type="ordered locus">DMR_27550</name>
</gene>
<reference key="1">
    <citation type="journal article" date="2009" name="Genome Res.">
        <title>Whole genome sequence of Desulfovibrio magneticus strain RS-1 revealed common gene clusters in magnetotactic bacteria.</title>
        <authorList>
            <person name="Nakazawa H."/>
            <person name="Arakaki A."/>
            <person name="Narita-Yamada S."/>
            <person name="Yashiro I."/>
            <person name="Jinno K."/>
            <person name="Aoki N."/>
            <person name="Tsuruyama A."/>
            <person name="Okamura Y."/>
            <person name="Tanikawa S."/>
            <person name="Fujita N."/>
            <person name="Takeyama H."/>
            <person name="Matsunaga T."/>
        </authorList>
    </citation>
    <scope>NUCLEOTIDE SEQUENCE [LARGE SCALE GENOMIC DNA]</scope>
    <source>
        <strain>ATCC 700980 / DSM 13731 / RS-1</strain>
    </source>
</reference>
<feature type="chain" id="PRO_1000202792" description="Holo-[acyl-carrier-protein] synthase">
    <location>
        <begin position="1"/>
        <end position="123"/>
    </location>
</feature>
<feature type="binding site" evidence="1">
    <location>
        <position position="8"/>
    </location>
    <ligand>
        <name>Mg(2+)</name>
        <dbReference type="ChEBI" id="CHEBI:18420"/>
    </ligand>
</feature>
<feature type="binding site" evidence="1">
    <location>
        <position position="55"/>
    </location>
    <ligand>
        <name>Mg(2+)</name>
        <dbReference type="ChEBI" id="CHEBI:18420"/>
    </ligand>
</feature>
<organism>
    <name type="scientific">Solidesulfovibrio magneticus (strain ATCC 700980 / DSM 13731 / RS-1)</name>
    <name type="common">Desulfovibrio magneticus</name>
    <dbReference type="NCBI Taxonomy" id="573370"/>
    <lineage>
        <taxon>Bacteria</taxon>
        <taxon>Pseudomonadati</taxon>
        <taxon>Thermodesulfobacteriota</taxon>
        <taxon>Desulfovibrionia</taxon>
        <taxon>Desulfovibrionales</taxon>
        <taxon>Desulfovibrionaceae</taxon>
        <taxon>Solidesulfovibrio</taxon>
    </lineage>
</organism>
<keyword id="KW-0963">Cytoplasm</keyword>
<keyword id="KW-0275">Fatty acid biosynthesis</keyword>
<keyword id="KW-0276">Fatty acid metabolism</keyword>
<keyword id="KW-0444">Lipid biosynthesis</keyword>
<keyword id="KW-0443">Lipid metabolism</keyword>
<keyword id="KW-0460">Magnesium</keyword>
<keyword id="KW-0479">Metal-binding</keyword>
<keyword id="KW-0808">Transferase</keyword>
<proteinExistence type="inferred from homology"/>
<name>ACPS_SOLM1</name>
<accession>C4XGU1</accession>